<reference key="1">
    <citation type="submission" date="2007-05" db="EMBL/GenBank/DDBJ databases">
        <title>Complete sequence of chromosome of Staphylococcus aureus subsp. aureus JH9.</title>
        <authorList>
            <consortium name="US DOE Joint Genome Institute"/>
            <person name="Copeland A."/>
            <person name="Lucas S."/>
            <person name="Lapidus A."/>
            <person name="Barry K."/>
            <person name="Detter J.C."/>
            <person name="Glavina del Rio T."/>
            <person name="Hammon N."/>
            <person name="Israni S."/>
            <person name="Pitluck S."/>
            <person name="Chain P."/>
            <person name="Malfatti S."/>
            <person name="Shin M."/>
            <person name="Vergez L."/>
            <person name="Schmutz J."/>
            <person name="Larimer F."/>
            <person name="Land M."/>
            <person name="Hauser L."/>
            <person name="Kyrpides N."/>
            <person name="Kim E."/>
            <person name="Tomasz A."/>
            <person name="Richardson P."/>
        </authorList>
    </citation>
    <scope>NUCLEOTIDE SEQUENCE [LARGE SCALE GENOMIC DNA]</scope>
    <source>
        <strain>JH9</strain>
    </source>
</reference>
<protein>
    <recommendedName>
        <fullName evidence="1">ATP-dependent helicase/deoxyribonuclease subunit B</fullName>
        <ecNumber evidence="1">3.1.-.-</ecNumber>
    </recommendedName>
    <alternativeName>
        <fullName evidence="1">ATP-dependent helicase/nuclease subunit AddB</fullName>
    </alternativeName>
</protein>
<feature type="chain" id="PRO_0000379207" description="ATP-dependent helicase/deoxyribonuclease subunit B">
    <location>
        <begin position="1"/>
        <end position="1157"/>
    </location>
</feature>
<feature type="domain" description="UvrD-like helicase ATP-binding" evidence="1">
    <location>
        <begin position="1"/>
        <end position="275"/>
    </location>
</feature>
<feature type="domain" description="UvrD-like helicase C-terminal" evidence="1">
    <location>
        <begin position="269"/>
        <end position="583"/>
    </location>
</feature>
<feature type="binding site" evidence="1">
    <location>
        <begin position="8"/>
        <end position="15"/>
    </location>
    <ligand>
        <name>ATP</name>
        <dbReference type="ChEBI" id="CHEBI:30616"/>
    </ligand>
</feature>
<feature type="binding site" evidence="1">
    <location>
        <position position="784"/>
    </location>
    <ligand>
        <name>[4Fe-4S] cluster</name>
        <dbReference type="ChEBI" id="CHEBI:49883"/>
    </ligand>
</feature>
<feature type="binding site" evidence="1">
    <location>
        <position position="1112"/>
    </location>
    <ligand>
        <name>[4Fe-4S] cluster</name>
        <dbReference type="ChEBI" id="CHEBI:49883"/>
    </ligand>
</feature>
<feature type="binding site" evidence="1">
    <location>
        <position position="1115"/>
    </location>
    <ligand>
        <name>[4Fe-4S] cluster</name>
        <dbReference type="ChEBI" id="CHEBI:49883"/>
    </ligand>
</feature>
<feature type="binding site" evidence="1">
    <location>
        <position position="1121"/>
    </location>
    <ligand>
        <name>[4Fe-4S] cluster</name>
        <dbReference type="ChEBI" id="CHEBI:49883"/>
    </ligand>
</feature>
<accession>A5IRE4</accession>
<gene>
    <name evidence="1" type="primary">addB</name>
    <name type="ordered locus">SaurJH9_0966</name>
</gene>
<sequence length="1157" mass="134357">MTLHAYLGRAGTGKSTKMLTEIKQKMKADPLGDPIILIAPTQSTFQLEQAFVNDPELNGSLRTEVLHFERLSHRIFQEVGSYSEQKLSKAATEMMIYNIVQEQQKYLKLYQSQAKYYGFSEKLTEQIQDFKKYAVTPEHLEHFIADKNMQTRTKNKLEDIALIYREFEQRIQNEFITGEDSLQYFIDCMPKSEWLKRADIYIDGFHNFSTIEYLIIKGLIKYAKSVTIILTTDGNHDQFSLFRKPSEVLRHIEEIANELNISIERQYFNQLYRFNNQDLKHLEQEFDVLQINRVACQGHINILESATMREEINEIARRIIVDIRDKQLRYQDIAILYRDESYAYLFDSILPLYNIPYNIDTKRSMTHHPVMEMIRSLIEVIQSNWQVNPMLRLLKTDVLTASYLKSAYLVDLLENFVLERGIYGKRWLDDELFNVEHFSKMGRKAHKLTEDERNTFEQVVKLKKDVIDKILHFEKQMSQAETVKDFATAFYESMEYFELPNQLMTERDELDLNGNHEKAEEIDQIWNGLIQILDDLVLVFGDEPMSMERFLEVFDIGLEQLEFVMIPQTLDQVSIGTMDLAKVDNKQHVYLVGMNDGTMPQPVTASSLITDEEKKYFEQQANVELSPTSDILQMDEAFVCYVAMTRAKGDVTFSYSLMGSSGDDKEISPFLNQIQSLFNQLEITNIPQYHEVNPLSLMQHAKQTKITLFEALRAWLDDEIVADSWLDAYQVIRDSDHLNQGLDYLMSALTFDNETVKLGETLSKDLYGKEINASVSRFEGYQQCPFKHYASHGLKLNERTKYELQNFDLGDIFHSVLKYISERINGDFKQLDLKKIRQLTNEALEEILPKVQFNLLNSSAYYRYLSRRIGAIVETTLSALKYQGTYSKFMPKHFETSFRRKPRTNDELIAQTLTTTQGIPINIRGQIDRIDTYTKNDTSFVNIIDYKSSEGSATLDLTKVYYGMQMQMMTYMDIVLQNKQRLGLTDIVKPGGLLYFHVHEPRIKFKSWSDIDEDKLEQDLIKKFKLSGLVNADQTVIDALDIRLEPKFTSDIVPVGLNKDGSLSKRGSQVADEATIYKFIQHNKENFIETASNIMDGHTEVAPLKYKQKLPCAFCSYQSVCHVDGMIDSKRYRTVDETINPIEAIQNININDEFGGE</sequence>
<comment type="function">
    <text evidence="1">The heterodimer acts as both an ATP-dependent DNA helicase and an ATP-dependent, dual-direction single-stranded exonuclease. Recognizes the chi site generating a DNA molecule suitable for the initiation of homologous recombination. The AddB subunit has 5' -&gt; 3' nuclease activity but not helicase activity.</text>
</comment>
<comment type="cofactor">
    <cofactor evidence="1">
        <name>Mg(2+)</name>
        <dbReference type="ChEBI" id="CHEBI:18420"/>
    </cofactor>
</comment>
<comment type="cofactor">
    <cofactor evidence="1">
        <name>[4Fe-4S] cluster</name>
        <dbReference type="ChEBI" id="CHEBI:49883"/>
    </cofactor>
    <text evidence="1">Binds 1 [4Fe-4S] cluster.</text>
</comment>
<comment type="subunit">
    <text evidence="1">Heterodimer of AddA and AddB.</text>
</comment>
<comment type="miscellaneous">
    <text evidence="1">Despite having conserved helicase domains, this subunit does not have helicase activity.</text>
</comment>
<comment type="similarity">
    <text evidence="1">Belongs to the helicase family. AddB/RexB type 1 subfamily.</text>
</comment>
<organism>
    <name type="scientific">Staphylococcus aureus (strain JH9)</name>
    <dbReference type="NCBI Taxonomy" id="359786"/>
    <lineage>
        <taxon>Bacteria</taxon>
        <taxon>Bacillati</taxon>
        <taxon>Bacillota</taxon>
        <taxon>Bacilli</taxon>
        <taxon>Bacillales</taxon>
        <taxon>Staphylococcaceae</taxon>
        <taxon>Staphylococcus</taxon>
    </lineage>
</organism>
<keyword id="KW-0004">4Fe-4S</keyword>
<keyword id="KW-0067">ATP-binding</keyword>
<keyword id="KW-0227">DNA damage</keyword>
<keyword id="KW-0234">DNA repair</keyword>
<keyword id="KW-0238">DNA-binding</keyword>
<keyword id="KW-0269">Exonuclease</keyword>
<keyword id="KW-0347">Helicase</keyword>
<keyword id="KW-0378">Hydrolase</keyword>
<keyword id="KW-0408">Iron</keyword>
<keyword id="KW-0411">Iron-sulfur</keyword>
<keyword id="KW-0479">Metal-binding</keyword>
<keyword id="KW-0540">Nuclease</keyword>
<keyword id="KW-0547">Nucleotide-binding</keyword>
<dbReference type="EC" id="3.1.-.-" evidence="1"/>
<dbReference type="EMBL" id="CP000703">
    <property type="protein sequence ID" value="ABQ48767.1"/>
    <property type="molecule type" value="Genomic_DNA"/>
</dbReference>
<dbReference type="RefSeq" id="WP_000172350.1">
    <property type="nucleotide sequence ID" value="NC_009487.1"/>
</dbReference>
<dbReference type="SMR" id="A5IRE4"/>
<dbReference type="KEGG" id="saj:SaurJH9_0966"/>
<dbReference type="HOGENOM" id="CLU_007838_0_0_9"/>
<dbReference type="GO" id="GO:0051539">
    <property type="term" value="F:4 iron, 4 sulfur cluster binding"/>
    <property type="evidence" value="ECO:0007669"/>
    <property type="project" value="UniProtKB-KW"/>
</dbReference>
<dbReference type="GO" id="GO:0008409">
    <property type="term" value="F:5'-3' exonuclease activity"/>
    <property type="evidence" value="ECO:0007669"/>
    <property type="project" value="UniProtKB-UniRule"/>
</dbReference>
<dbReference type="GO" id="GO:0005524">
    <property type="term" value="F:ATP binding"/>
    <property type="evidence" value="ECO:0007669"/>
    <property type="project" value="UniProtKB-UniRule"/>
</dbReference>
<dbReference type="GO" id="GO:0003690">
    <property type="term" value="F:double-stranded DNA binding"/>
    <property type="evidence" value="ECO:0007669"/>
    <property type="project" value="UniProtKB-UniRule"/>
</dbReference>
<dbReference type="GO" id="GO:0004386">
    <property type="term" value="F:helicase activity"/>
    <property type="evidence" value="ECO:0007669"/>
    <property type="project" value="UniProtKB-KW"/>
</dbReference>
<dbReference type="GO" id="GO:0046872">
    <property type="term" value="F:metal ion binding"/>
    <property type="evidence" value="ECO:0007669"/>
    <property type="project" value="UniProtKB-KW"/>
</dbReference>
<dbReference type="GO" id="GO:0000724">
    <property type="term" value="P:double-strand break repair via homologous recombination"/>
    <property type="evidence" value="ECO:0007669"/>
    <property type="project" value="UniProtKB-UniRule"/>
</dbReference>
<dbReference type="Gene3D" id="3.90.320.10">
    <property type="match status" value="1"/>
</dbReference>
<dbReference type="Gene3D" id="3.40.50.300">
    <property type="entry name" value="P-loop containing nucleotide triphosphate hydrolases"/>
    <property type="match status" value="4"/>
</dbReference>
<dbReference type="HAMAP" id="MF_01452">
    <property type="entry name" value="AddB_type1"/>
    <property type="match status" value="1"/>
</dbReference>
<dbReference type="InterPro" id="IPR049035">
    <property type="entry name" value="ADDB_N"/>
</dbReference>
<dbReference type="InterPro" id="IPR014140">
    <property type="entry name" value="DNA_helicase_suAddB"/>
</dbReference>
<dbReference type="InterPro" id="IPR014017">
    <property type="entry name" value="DNA_helicase_UvrD-like_C"/>
</dbReference>
<dbReference type="InterPro" id="IPR027417">
    <property type="entry name" value="P-loop_NTPase"/>
</dbReference>
<dbReference type="InterPro" id="IPR011604">
    <property type="entry name" value="PDDEXK-like_dom_sf"/>
</dbReference>
<dbReference type="InterPro" id="IPR038726">
    <property type="entry name" value="PDDEXK_AddAB-type"/>
</dbReference>
<dbReference type="NCBIfam" id="TIGR02773">
    <property type="entry name" value="addB_Gpos"/>
    <property type="match status" value="1"/>
</dbReference>
<dbReference type="PANTHER" id="PTHR30591">
    <property type="entry name" value="RECBCD ENZYME SUBUNIT RECC"/>
    <property type="match status" value="1"/>
</dbReference>
<dbReference type="PANTHER" id="PTHR30591:SF1">
    <property type="entry name" value="RECBCD ENZYME SUBUNIT RECC"/>
    <property type="match status" value="1"/>
</dbReference>
<dbReference type="Pfam" id="PF21445">
    <property type="entry name" value="ADDB_N"/>
    <property type="match status" value="1"/>
</dbReference>
<dbReference type="Pfam" id="PF12705">
    <property type="entry name" value="PDDEXK_1"/>
    <property type="match status" value="1"/>
</dbReference>
<dbReference type="Pfam" id="PF13361">
    <property type="entry name" value="UvrD_C"/>
    <property type="match status" value="1"/>
</dbReference>
<dbReference type="SUPFAM" id="SSF52540">
    <property type="entry name" value="P-loop containing nucleoside triphosphate hydrolases"/>
    <property type="match status" value="1"/>
</dbReference>
<dbReference type="PROSITE" id="PS51198">
    <property type="entry name" value="UVRD_HELICASE_ATP_BIND"/>
    <property type="match status" value="1"/>
</dbReference>
<dbReference type="PROSITE" id="PS51217">
    <property type="entry name" value="UVRD_HELICASE_CTER"/>
    <property type="match status" value="1"/>
</dbReference>
<name>ADDB_STAA9</name>
<evidence type="ECO:0000255" key="1">
    <source>
        <dbReference type="HAMAP-Rule" id="MF_01452"/>
    </source>
</evidence>
<proteinExistence type="inferred from homology"/>